<protein>
    <recommendedName>
        <fullName evidence="1">Ribosome-recycling factor</fullName>
        <shortName evidence="1">RRF</shortName>
    </recommendedName>
    <alternativeName>
        <fullName evidence="1">Ribosome-releasing factor</fullName>
    </alternativeName>
</protein>
<gene>
    <name evidence="1" type="primary">frr</name>
    <name type="ordered locus">Mmcs_2004</name>
</gene>
<organism>
    <name type="scientific">Mycobacterium sp. (strain MCS)</name>
    <dbReference type="NCBI Taxonomy" id="164756"/>
    <lineage>
        <taxon>Bacteria</taxon>
        <taxon>Bacillati</taxon>
        <taxon>Actinomycetota</taxon>
        <taxon>Actinomycetes</taxon>
        <taxon>Mycobacteriales</taxon>
        <taxon>Mycobacteriaceae</taxon>
        <taxon>Mycobacterium</taxon>
    </lineage>
</organism>
<reference key="1">
    <citation type="submission" date="2006-06" db="EMBL/GenBank/DDBJ databases">
        <title>Complete sequence of chromosome of Mycobacterium sp. MCS.</title>
        <authorList>
            <consortium name="US DOE Joint Genome Institute"/>
            <person name="Copeland A."/>
            <person name="Lucas S."/>
            <person name="Lapidus A."/>
            <person name="Barry K."/>
            <person name="Detter J.C."/>
            <person name="Glavina del Rio T."/>
            <person name="Hammon N."/>
            <person name="Israni S."/>
            <person name="Dalin E."/>
            <person name="Tice H."/>
            <person name="Pitluck S."/>
            <person name="Martinez M."/>
            <person name="Schmutz J."/>
            <person name="Larimer F."/>
            <person name="Land M."/>
            <person name="Hauser L."/>
            <person name="Kyrpides N."/>
            <person name="Kim E."/>
            <person name="Miller C.D."/>
            <person name="Hughes J.E."/>
            <person name="Anderson A.J."/>
            <person name="Sims R.C."/>
            <person name="Richardson P."/>
        </authorList>
    </citation>
    <scope>NUCLEOTIDE SEQUENCE [LARGE SCALE GENOMIC DNA]</scope>
    <source>
        <strain>MCS</strain>
    </source>
</reference>
<evidence type="ECO:0000255" key="1">
    <source>
        <dbReference type="HAMAP-Rule" id="MF_00040"/>
    </source>
</evidence>
<evidence type="ECO:0000256" key="2">
    <source>
        <dbReference type="SAM" id="MobiDB-lite"/>
    </source>
</evidence>
<comment type="function">
    <text evidence="1">Responsible for the release of ribosomes from messenger RNA at the termination of protein biosynthesis. May increase the efficiency of translation by recycling ribosomes from one round of translation to another.</text>
</comment>
<comment type="subcellular location">
    <subcellularLocation>
        <location evidence="1">Cytoplasm</location>
    </subcellularLocation>
</comment>
<comment type="similarity">
    <text evidence="1">Belongs to the RRF family.</text>
</comment>
<keyword id="KW-0963">Cytoplasm</keyword>
<keyword id="KW-0648">Protein biosynthesis</keyword>
<dbReference type="EMBL" id="CP000384">
    <property type="protein sequence ID" value="ABG08113.1"/>
    <property type="molecule type" value="Genomic_DNA"/>
</dbReference>
<dbReference type="SMR" id="Q1BAH1"/>
<dbReference type="KEGG" id="mmc:Mmcs_2004"/>
<dbReference type="HOGENOM" id="CLU_073981_2_0_11"/>
<dbReference type="BioCyc" id="MSP164756:G1G6O-2050-MONOMER"/>
<dbReference type="GO" id="GO:0005737">
    <property type="term" value="C:cytoplasm"/>
    <property type="evidence" value="ECO:0007669"/>
    <property type="project" value="UniProtKB-SubCell"/>
</dbReference>
<dbReference type="GO" id="GO:0043023">
    <property type="term" value="F:ribosomal large subunit binding"/>
    <property type="evidence" value="ECO:0007669"/>
    <property type="project" value="TreeGrafter"/>
</dbReference>
<dbReference type="GO" id="GO:0006415">
    <property type="term" value="P:translational termination"/>
    <property type="evidence" value="ECO:0007669"/>
    <property type="project" value="UniProtKB-UniRule"/>
</dbReference>
<dbReference type="CDD" id="cd00520">
    <property type="entry name" value="RRF"/>
    <property type="match status" value="1"/>
</dbReference>
<dbReference type="FunFam" id="1.10.132.20:FF:000001">
    <property type="entry name" value="Ribosome-recycling factor"/>
    <property type="match status" value="1"/>
</dbReference>
<dbReference type="FunFam" id="3.30.1360.40:FF:000001">
    <property type="entry name" value="Ribosome-recycling factor"/>
    <property type="match status" value="1"/>
</dbReference>
<dbReference type="Gene3D" id="3.30.1360.40">
    <property type="match status" value="1"/>
</dbReference>
<dbReference type="Gene3D" id="1.10.132.20">
    <property type="entry name" value="Ribosome-recycling factor"/>
    <property type="match status" value="1"/>
</dbReference>
<dbReference type="HAMAP" id="MF_00040">
    <property type="entry name" value="RRF"/>
    <property type="match status" value="1"/>
</dbReference>
<dbReference type="InterPro" id="IPR002661">
    <property type="entry name" value="Ribosome_recyc_fac"/>
</dbReference>
<dbReference type="InterPro" id="IPR023584">
    <property type="entry name" value="Ribosome_recyc_fac_dom"/>
</dbReference>
<dbReference type="InterPro" id="IPR036191">
    <property type="entry name" value="RRF_sf"/>
</dbReference>
<dbReference type="NCBIfam" id="TIGR00496">
    <property type="entry name" value="frr"/>
    <property type="match status" value="1"/>
</dbReference>
<dbReference type="PANTHER" id="PTHR20982:SF3">
    <property type="entry name" value="MITOCHONDRIAL RIBOSOME RECYCLING FACTOR PSEUDO 1"/>
    <property type="match status" value="1"/>
</dbReference>
<dbReference type="PANTHER" id="PTHR20982">
    <property type="entry name" value="RIBOSOME RECYCLING FACTOR"/>
    <property type="match status" value="1"/>
</dbReference>
<dbReference type="Pfam" id="PF01765">
    <property type="entry name" value="RRF"/>
    <property type="match status" value="1"/>
</dbReference>
<dbReference type="SUPFAM" id="SSF55194">
    <property type="entry name" value="Ribosome recycling factor, RRF"/>
    <property type="match status" value="1"/>
</dbReference>
<feature type="chain" id="PRO_1000003204" description="Ribosome-recycling factor">
    <location>
        <begin position="1"/>
        <end position="185"/>
    </location>
</feature>
<feature type="region of interest" description="Disordered" evidence="2">
    <location>
        <begin position="145"/>
        <end position="164"/>
    </location>
</feature>
<proteinExistence type="inferred from homology"/>
<accession>Q1BAH1</accession>
<name>RRF_MYCSS</name>
<sequence length="185" mass="20892">MIDETLFDAEEKMEKAVSVARDDLSSIRTGRANPGMFSRINVDYYGATTPITQLSSINVPEARMVVIKPYEANQLRNIEDAIRNSDLGVNPTNDGNIIRVSIPQLTEERRRDLVKQAKAKGEDAKVSVRNIRRKAMEELARIKKDGEAGEDEVSRAEKDLDKTTHTYTHQIDELVKHKEGELLEV</sequence>